<evidence type="ECO:0000255" key="1">
    <source>
        <dbReference type="HAMAP-Rule" id="MF_00203"/>
    </source>
</evidence>
<reference key="1">
    <citation type="submission" date="2005-11" db="EMBL/GenBank/DDBJ databases">
        <title>The complete genome sequence of Lawsonia intracellularis: the causative agent of proliferative enteropathy.</title>
        <authorList>
            <person name="Kaur K."/>
            <person name="Zhang Q."/>
            <person name="Beckler D."/>
            <person name="Munir S."/>
            <person name="Li L."/>
            <person name="Kinsley K."/>
            <person name="Herron L."/>
            <person name="Peterson A."/>
            <person name="May B."/>
            <person name="Singh S."/>
            <person name="Gebhart C."/>
            <person name="Kapur V."/>
        </authorList>
    </citation>
    <scope>NUCLEOTIDE SEQUENCE [LARGE SCALE GENOMIC DNA]</scope>
    <source>
        <strain>PHE/MN1-00</strain>
    </source>
</reference>
<gene>
    <name evidence="1" type="primary">uvrC</name>
    <name type="ordered locus">LI0701</name>
</gene>
<name>UVRC_LAWIP</name>
<organism>
    <name type="scientific">Lawsonia intracellularis (strain PHE/MN1-00)</name>
    <dbReference type="NCBI Taxonomy" id="363253"/>
    <lineage>
        <taxon>Bacteria</taxon>
        <taxon>Pseudomonadati</taxon>
        <taxon>Thermodesulfobacteriota</taxon>
        <taxon>Desulfovibrionia</taxon>
        <taxon>Desulfovibrionales</taxon>
        <taxon>Desulfovibrionaceae</taxon>
        <taxon>Lawsonia</taxon>
    </lineage>
</organism>
<sequence>MERPHPSSIPTTPGVYLYKDSQGRIIYVGKARNLRKRVLSYFRDGLVITPKTKAMMNHANLLETISTNTEKEALLLEASLIKKHRPRYNIVLRDDKQYLLFRIQKGIPFPRLEIVRQSYKDNAVYFGPFTSGTSVRDTWKFIHKIFPLRRCSDKVFNNRIRPCLYFYLQQCLAPCTEEVDPKDYAVLIQKVELFLSGKSKELVELLQKDMLYASEALEFEKAATLRDQIQAIKHTIERQSVVLPEGGDMDVIGIAVVNNGLALGFLFVREGKLLDGRTFFWPGLELDDGPELLGSFLSQFYSPISSIPPRIIVPWLPESTNNKDEISEDTFETLKYVLEDIRNSTVRIEVPKNIIESNLVDIAVTNAREAVQTKLGEPMSAKLAKVFHTDKPIFRIECVDVSHISGTNTRVGMVVFEDSQPLKNDYRIYSTTEDNSPFIKGDDYAALASWAKRRIQSGPPWADLVLIDGGKGQINAVQRVFNEHHLKDVFILAGIAKARNEEGRVDRRAGNIGDKIFVVGRMNPLTLKEGSPELLFLQYVRDTAHNFVLGKHRKARKNTALLGELLRIPGIGQATAKLLWSHFKTVEAMTCATIKDLEAIPGIGEAKARMLAERLQSLRNQ</sequence>
<dbReference type="EMBL" id="AM180252">
    <property type="protein sequence ID" value="CAJ54755.1"/>
    <property type="molecule type" value="Genomic_DNA"/>
</dbReference>
<dbReference type="RefSeq" id="WP_011526784.1">
    <property type="nucleotide sequence ID" value="NC_008011.1"/>
</dbReference>
<dbReference type="SMR" id="Q1MQH2"/>
<dbReference type="STRING" id="363253.LI0701"/>
<dbReference type="KEGG" id="lip:LI0701"/>
<dbReference type="eggNOG" id="COG0322">
    <property type="taxonomic scope" value="Bacteria"/>
</dbReference>
<dbReference type="HOGENOM" id="CLU_014841_3_2_7"/>
<dbReference type="OrthoDB" id="9804933at2"/>
<dbReference type="Proteomes" id="UP000002430">
    <property type="component" value="Chromosome"/>
</dbReference>
<dbReference type="GO" id="GO:0005737">
    <property type="term" value="C:cytoplasm"/>
    <property type="evidence" value="ECO:0007669"/>
    <property type="project" value="UniProtKB-SubCell"/>
</dbReference>
<dbReference type="GO" id="GO:0009380">
    <property type="term" value="C:excinuclease repair complex"/>
    <property type="evidence" value="ECO:0007669"/>
    <property type="project" value="InterPro"/>
</dbReference>
<dbReference type="GO" id="GO:0003677">
    <property type="term" value="F:DNA binding"/>
    <property type="evidence" value="ECO:0007669"/>
    <property type="project" value="UniProtKB-UniRule"/>
</dbReference>
<dbReference type="GO" id="GO:0009381">
    <property type="term" value="F:excinuclease ABC activity"/>
    <property type="evidence" value="ECO:0007669"/>
    <property type="project" value="UniProtKB-UniRule"/>
</dbReference>
<dbReference type="GO" id="GO:0006289">
    <property type="term" value="P:nucleotide-excision repair"/>
    <property type="evidence" value="ECO:0007669"/>
    <property type="project" value="UniProtKB-UniRule"/>
</dbReference>
<dbReference type="GO" id="GO:0009432">
    <property type="term" value="P:SOS response"/>
    <property type="evidence" value="ECO:0007669"/>
    <property type="project" value="UniProtKB-UniRule"/>
</dbReference>
<dbReference type="CDD" id="cd10434">
    <property type="entry name" value="GIY-YIG_UvrC_Cho"/>
    <property type="match status" value="1"/>
</dbReference>
<dbReference type="FunFam" id="3.40.1440.10:FF:000001">
    <property type="entry name" value="UvrABC system protein C"/>
    <property type="match status" value="1"/>
</dbReference>
<dbReference type="Gene3D" id="1.10.150.20">
    <property type="entry name" value="5' to 3' exonuclease, C-terminal subdomain"/>
    <property type="match status" value="1"/>
</dbReference>
<dbReference type="Gene3D" id="3.40.1440.10">
    <property type="entry name" value="GIY-YIG endonuclease"/>
    <property type="match status" value="1"/>
</dbReference>
<dbReference type="Gene3D" id="4.10.860.10">
    <property type="entry name" value="UVR domain"/>
    <property type="match status" value="1"/>
</dbReference>
<dbReference type="Gene3D" id="3.30.420.340">
    <property type="entry name" value="UvrC, RNAse H endonuclease domain"/>
    <property type="match status" value="1"/>
</dbReference>
<dbReference type="HAMAP" id="MF_00203">
    <property type="entry name" value="UvrC"/>
    <property type="match status" value="1"/>
</dbReference>
<dbReference type="InterPro" id="IPR000305">
    <property type="entry name" value="GIY-YIG_endonuc"/>
</dbReference>
<dbReference type="InterPro" id="IPR035901">
    <property type="entry name" value="GIY-YIG_endonuc_sf"/>
</dbReference>
<dbReference type="InterPro" id="IPR047296">
    <property type="entry name" value="GIY-YIG_UvrC_Cho"/>
</dbReference>
<dbReference type="InterPro" id="IPR003583">
    <property type="entry name" value="Hlx-hairpin-Hlx_DNA-bd_motif"/>
</dbReference>
<dbReference type="InterPro" id="IPR010994">
    <property type="entry name" value="RuvA_2-like"/>
</dbReference>
<dbReference type="InterPro" id="IPR001943">
    <property type="entry name" value="UVR_dom"/>
</dbReference>
<dbReference type="InterPro" id="IPR036876">
    <property type="entry name" value="UVR_dom_sf"/>
</dbReference>
<dbReference type="InterPro" id="IPR050066">
    <property type="entry name" value="UvrABC_protein_C"/>
</dbReference>
<dbReference type="InterPro" id="IPR004791">
    <property type="entry name" value="UvrC"/>
</dbReference>
<dbReference type="InterPro" id="IPR001162">
    <property type="entry name" value="UvrC_RNase_H_dom"/>
</dbReference>
<dbReference type="InterPro" id="IPR038476">
    <property type="entry name" value="UvrC_RNase_H_dom_sf"/>
</dbReference>
<dbReference type="NCBIfam" id="TIGR00194">
    <property type="entry name" value="uvrC"/>
    <property type="match status" value="1"/>
</dbReference>
<dbReference type="PANTHER" id="PTHR30562:SF1">
    <property type="entry name" value="UVRABC SYSTEM PROTEIN C"/>
    <property type="match status" value="1"/>
</dbReference>
<dbReference type="PANTHER" id="PTHR30562">
    <property type="entry name" value="UVRC/OXIDOREDUCTASE"/>
    <property type="match status" value="1"/>
</dbReference>
<dbReference type="Pfam" id="PF01541">
    <property type="entry name" value="GIY-YIG"/>
    <property type="match status" value="1"/>
</dbReference>
<dbReference type="Pfam" id="PF14520">
    <property type="entry name" value="HHH_5"/>
    <property type="match status" value="1"/>
</dbReference>
<dbReference type="Pfam" id="PF02151">
    <property type="entry name" value="UVR"/>
    <property type="match status" value="1"/>
</dbReference>
<dbReference type="Pfam" id="PF22920">
    <property type="entry name" value="UvrC_RNaseH"/>
    <property type="match status" value="1"/>
</dbReference>
<dbReference type="Pfam" id="PF08459">
    <property type="entry name" value="UvrC_RNaseH_dom"/>
    <property type="match status" value="1"/>
</dbReference>
<dbReference type="SMART" id="SM00465">
    <property type="entry name" value="GIYc"/>
    <property type="match status" value="1"/>
</dbReference>
<dbReference type="SMART" id="SM00278">
    <property type="entry name" value="HhH1"/>
    <property type="match status" value="2"/>
</dbReference>
<dbReference type="SUPFAM" id="SSF46600">
    <property type="entry name" value="C-terminal UvrC-binding domain of UvrB"/>
    <property type="match status" value="1"/>
</dbReference>
<dbReference type="SUPFAM" id="SSF82771">
    <property type="entry name" value="GIY-YIG endonuclease"/>
    <property type="match status" value="1"/>
</dbReference>
<dbReference type="SUPFAM" id="SSF47781">
    <property type="entry name" value="RuvA domain 2-like"/>
    <property type="match status" value="1"/>
</dbReference>
<dbReference type="PROSITE" id="PS50164">
    <property type="entry name" value="GIY_YIG"/>
    <property type="match status" value="1"/>
</dbReference>
<dbReference type="PROSITE" id="PS50151">
    <property type="entry name" value="UVR"/>
    <property type="match status" value="1"/>
</dbReference>
<dbReference type="PROSITE" id="PS50165">
    <property type="entry name" value="UVRC"/>
    <property type="match status" value="1"/>
</dbReference>
<feature type="chain" id="PRO_0000264906" description="UvrABC system protein C">
    <location>
        <begin position="1"/>
        <end position="621"/>
    </location>
</feature>
<feature type="domain" description="GIY-YIG" evidence="1">
    <location>
        <begin position="11"/>
        <end position="90"/>
    </location>
</feature>
<feature type="domain" description="UVR" evidence="1">
    <location>
        <begin position="200"/>
        <end position="235"/>
    </location>
</feature>
<protein>
    <recommendedName>
        <fullName evidence="1">UvrABC system protein C</fullName>
        <shortName evidence="1">Protein UvrC</shortName>
    </recommendedName>
    <alternativeName>
        <fullName evidence="1">Excinuclease ABC subunit C</fullName>
    </alternativeName>
</protein>
<accession>Q1MQH2</accession>
<comment type="function">
    <text evidence="1">The UvrABC repair system catalyzes the recognition and processing of DNA lesions. UvrC both incises the 5' and 3' sides of the lesion. The N-terminal half is responsible for the 3' incision and the C-terminal half is responsible for the 5' incision.</text>
</comment>
<comment type="subunit">
    <text evidence="1">Interacts with UvrB in an incision complex.</text>
</comment>
<comment type="subcellular location">
    <subcellularLocation>
        <location evidence="1">Cytoplasm</location>
    </subcellularLocation>
</comment>
<comment type="similarity">
    <text evidence="1">Belongs to the UvrC family.</text>
</comment>
<keyword id="KW-0963">Cytoplasm</keyword>
<keyword id="KW-0227">DNA damage</keyword>
<keyword id="KW-0228">DNA excision</keyword>
<keyword id="KW-0234">DNA repair</keyword>
<keyword id="KW-0267">Excision nuclease</keyword>
<keyword id="KW-1185">Reference proteome</keyword>
<keyword id="KW-0742">SOS response</keyword>
<proteinExistence type="inferred from homology"/>